<comment type="function">
    <text evidence="1">Binds directly to 23S rRNA. The L1 stalk is quite mobile in the ribosome, and is involved in E site tRNA release.</text>
</comment>
<comment type="function">
    <text evidence="1">Protein L1 is also a translational repressor protein, it controls the translation of the L11 operon by binding to its mRNA.</text>
</comment>
<comment type="subunit">
    <text evidence="1">Part of the 50S ribosomal subunit.</text>
</comment>
<comment type="similarity">
    <text evidence="1">Belongs to the universal ribosomal protein uL1 family.</text>
</comment>
<protein>
    <recommendedName>
        <fullName evidence="1">Large ribosomal subunit protein uL1</fullName>
    </recommendedName>
    <alternativeName>
        <fullName evidence="2">50S ribosomal protein L1</fullName>
    </alternativeName>
</protein>
<reference key="1">
    <citation type="journal article" date="2005" name="Nat. Biotechnol.">
        <title>Genome sequence of the chlorinated compound-respiring bacterium Dehalococcoides species strain CBDB1.</title>
        <authorList>
            <person name="Kube M."/>
            <person name="Beck A."/>
            <person name="Zinder S.H."/>
            <person name="Kuhl H."/>
            <person name="Reinhardt R."/>
            <person name="Adrian L."/>
        </authorList>
    </citation>
    <scope>NUCLEOTIDE SEQUENCE [LARGE SCALE GENOMIC DNA]</scope>
    <source>
        <strain>CBDB1</strain>
    </source>
</reference>
<feature type="chain" id="PRO_0000230606" description="Large ribosomal subunit protein uL1">
    <location>
        <begin position="1"/>
        <end position="237"/>
    </location>
</feature>
<proteinExistence type="inferred from homology"/>
<gene>
    <name evidence="1" type="primary">rplA</name>
    <name type="ordered locus">cbdbA956</name>
</gene>
<organism>
    <name type="scientific">Dehalococcoides mccartyi (strain CBDB1)</name>
    <dbReference type="NCBI Taxonomy" id="255470"/>
    <lineage>
        <taxon>Bacteria</taxon>
        <taxon>Bacillati</taxon>
        <taxon>Chloroflexota</taxon>
        <taxon>Dehalococcoidia</taxon>
        <taxon>Dehalococcoidales</taxon>
        <taxon>Dehalococcoidaceae</taxon>
        <taxon>Dehalococcoides</taxon>
    </lineage>
</organism>
<name>RL1_DEHMC</name>
<evidence type="ECO:0000255" key="1">
    <source>
        <dbReference type="HAMAP-Rule" id="MF_01318"/>
    </source>
</evidence>
<evidence type="ECO:0000305" key="2"/>
<accession>Q3ZXX8</accession>
<keyword id="KW-0678">Repressor</keyword>
<keyword id="KW-0687">Ribonucleoprotein</keyword>
<keyword id="KW-0689">Ribosomal protein</keyword>
<keyword id="KW-0694">RNA-binding</keyword>
<keyword id="KW-0699">rRNA-binding</keyword>
<keyword id="KW-0810">Translation regulation</keyword>
<keyword id="KW-0820">tRNA-binding</keyword>
<dbReference type="EMBL" id="AJ965256">
    <property type="protein sequence ID" value="CAI83082.1"/>
    <property type="molecule type" value="Genomic_DNA"/>
</dbReference>
<dbReference type="RefSeq" id="WP_011309433.1">
    <property type="nucleotide sequence ID" value="NC_007356.1"/>
</dbReference>
<dbReference type="SMR" id="Q3ZXX8"/>
<dbReference type="KEGG" id="deh:cbdbA956"/>
<dbReference type="HOGENOM" id="CLU_062853_0_0_0"/>
<dbReference type="Proteomes" id="UP000000433">
    <property type="component" value="Chromosome"/>
</dbReference>
<dbReference type="GO" id="GO:0015934">
    <property type="term" value="C:large ribosomal subunit"/>
    <property type="evidence" value="ECO:0007669"/>
    <property type="project" value="InterPro"/>
</dbReference>
<dbReference type="GO" id="GO:0019843">
    <property type="term" value="F:rRNA binding"/>
    <property type="evidence" value="ECO:0007669"/>
    <property type="project" value="UniProtKB-UniRule"/>
</dbReference>
<dbReference type="GO" id="GO:0003735">
    <property type="term" value="F:structural constituent of ribosome"/>
    <property type="evidence" value="ECO:0007669"/>
    <property type="project" value="InterPro"/>
</dbReference>
<dbReference type="GO" id="GO:0000049">
    <property type="term" value="F:tRNA binding"/>
    <property type="evidence" value="ECO:0007669"/>
    <property type="project" value="UniProtKB-KW"/>
</dbReference>
<dbReference type="GO" id="GO:0006417">
    <property type="term" value="P:regulation of translation"/>
    <property type="evidence" value="ECO:0007669"/>
    <property type="project" value="UniProtKB-KW"/>
</dbReference>
<dbReference type="GO" id="GO:0006412">
    <property type="term" value="P:translation"/>
    <property type="evidence" value="ECO:0007669"/>
    <property type="project" value="UniProtKB-UniRule"/>
</dbReference>
<dbReference type="CDD" id="cd00403">
    <property type="entry name" value="Ribosomal_L1"/>
    <property type="match status" value="1"/>
</dbReference>
<dbReference type="FunFam" id="3.40.50.790:FF:000001">
    <property type="entry name" value="50S ribosomal protein L1"/>
    <property type="match status" value="1"/>
</dbReference>
<dbReference type="Gene3D" id="3.30.190.20">
    <property type="match status" value="1"/>
</dbReference>
<dbReference type="Gene3D" id="3.40.50.790">
    <property type="match status" value="1"/>
</dbReference>
<dbReference type="HAMAP" id="MF_01318_B">
    <property type="entry name" value="Ribosomal_uL1_B"/>
    <property type="match status" value="1"/>
</dbReference>
<dbReference type="InterPro" id="IPR005878">
    <property type="entry name" value="Ribosom_uL1_bac-type"/>
</dbReference>
<dbReference type="InterPro" id="IPR002143">
    <property type="entry name" value="Ribosomal_uL1"/>
</dbReference>
<dbReference type="InterPro" id="IPR023674">
    <property type="entry name" value="Ribosomal_uL1-like"/>
</dbReference>
<dbReference type="InterPro" id="IPR028364">
    <property type="entry name" value="Ribosomal_uL1/biogenesis"/>
</dbReference>
<dbReference type="InterPro" id="IPR016095">
    <property type="entry name" value="Ribosomal_uL1_3-a/b-sand"/>
</dbReference>
<dbReference type="InterPro" id="IPR023673">
    <property type="entry name" value="Ribosomal_uL1_CS"/>
</dbReference>
<dbReference type="NCBIfam" id="TIGR01169">
    <property type="entry name" value="rplA_bact"/>
    <property type="match status" value="1"/>
</dbReference>
<dbReference type="PANTHER" id="PTHR36427">
    <property type="entry name" value="54S RIBOSOMAL PROTEIN L1, MITOCHONDRIAL"/>
    <property type="match status" value="1"/>
</dbReference>
<dbReference type="PANTHER" id="PTHR36427:SF3">
    <property type="entry name" value="LARGE RIBOSOMAL SUBUNIT PROTEIN UL1M"/>
    <property type="match status" value="1"/>
</dbReference>
<dbReference type="Pfam" id="PF00687">
    <property type="entry name" value="Ribosomal_L1"/>
    <property type="match status" value="1"/>
</dbReference>
<dbReference type="PIRSF" id="PIRSF002155">
    <property type="entry name" value="Ribosomal_L1"/>
    <property type="match status" value="1"/>
</dbReference>
<dbReference type="SUPFAM" id="SSF56808">
    <property type="entry name" value="Ribosomal protein L1"/>
    <property type="match status" value="1"/>
</dbReference>
<dbReference type="PROSITE" id="PS01199">
    <property type="entry name" value="RIBOSOMAL_L1"/>
    <property type="match status" value="1"/>
</dbReference>
<sequence length="237" mass="25354">MVTHGKKYQDAIKLLDQSVAYAPAEAIDLAKKMSAAKFDETVEMHLKMGLDPKNATQQLRGVAVLPHGLGKTVRVLVFAQGEAEKAAQVAGADVYGGDELIKKIEAGFLDFDVAISTPDMMSKVGKLGKVLGRRGLMPNPKSGTVVPAEDFKKVIEEARKGRVEFKLDRSGIVHIILGKASFEGQMLLENMTSVVDAIIRSKPTGAKGQYIKSAYLATTMGPGVRLDLRAVSAMGGV</sequence>